<organism>
    <name type="scientific">Erwinia tasmaniensis (strain DSM 17950 / CFBP 7177 / CIP 109463 / NCPPB 4357 / Et1/99)</name>
    <dbReference type="NCBI Taxonomy" id="465817"/>
    <lineage>
        <taxon>Bacteria</taxon>
        <taxon>Pseudomonadati</taxon>
        <taxon>Pseudomonadota</taxon>
        <taxon>Gammaproteobacteria</taxon>
        <taxon>Enterobacterales</taxon>
        <taxon>Erwiniaceae</taxon>
        <taxon>Erwinia</taxon>
    </lineage>
</organism>
<proteinExistence type="inferred from homology"/>
<feature type="chain" id="PRO_1000125724" description="Glucose-6-phosphate isomerase">
    <location>
        <begin position="1"/>
        <end position="547"/>
    </location>
</feature>
<feature type="active site" description="Proton donor" evidence="1">
    <location>
        <position position="354"/>
    </location>
</feature>
<feature type="active site" evidence="1">
    <location>
        <position position="385"/>
    </location>
</feature>
<feature type="active site" evidence="1">
    <location>
        <position position="513"/>
    </location>
</feature>
<evidence type="ECO:0000255" key="1">
    <source>
        <dbReference type="HAMAP-Rule" id="MF_00473"/>
    </source>
</evidence>
<sequence length="547" mass="61040">MKNINPTQTAAWQALQQHFEQMKEVHIADLFANDANRFAAFSATFDDRMLVDYSKNRITSETLEKLQALAKETDLQSAIKSMFSGEKINRTEDRAVLHVALRNRSNTPIVVDGKDVMPEVNAVLAKMKAFSERIISGEWKGFTGKAITDVVNIGIGGSDLGPFMVTEALRPYKNHLKMHFVSNVDGTHIAETLKMLSPETTLFLVASKTFTTQETMTNAHSAREWFLTSGQQQDVAKHFAALSTNGEAVSEFGIDTDNMFEFWDWVGGRYSLWSAIGLSIALSIGYENFEKLLSGAHAMDRHFADTPEEKNLPILLALIGIWYNNFFGAETEAILPYDQYMHRFAAYFQQGNMESNGKYVDRAGNPVSYQTGPIIWGEPGTNGQHAFYQLIHQGTKLVPCDFIAPAVSHNQLGDHHSKLLSNFFAQTEALAFGKSREVVEKEFADAGKDAQSVEHIVPFKVFEGNRPTNSILLRDITPYSLGALIAMYEHKIFTQGAILNIFTFDQWGVELGKQLASRILPELADAAEVSSHDGSTNGLINLYKSWR</sequence>
<reference key="1">
    <citation type="journal article" date="2008" name="Environ. Microbiol.">
        <title>The genome of Erwinia tasmaniensis strain Et1/99, a non-pathogenic bacterium in the genus Erwinia.</title>
        <authorList>
            <person name="Kube M."/>
            <person name="Migdoll A.M."/>
            <person name="Mueller I."/>
            <person name="Kuhl H."/>
            <person name="Beck A."/>
            <person name="Reinhardt R."/>
            <person name="Geider K."/>
        </authorList>
    </citation>
    <scope>NUCLEOTIDE SEQUENCE [LARGE SCALE GENOMIC DNA]</scope>
    <source>
        <strain>DSM 17950 / CFBP 7177 / CIP 109463 / NCPPB 4357 / Et1/99</strain>
    </source>
</reference>
<accession>B2VKB1</accession>
<name>G6PI_ERWT9</name>
<gene>
    <name evidence="1" type="primary">pgi</name>
    <name type="ordered locus">ETA_31110</name>
</gene>
<keyword id="KW-0963">Cytoplasm</keyword>
<keyword id="KW-0312">Gluconeogenesis</keyword>
<keyword id="KW-0324">Glycolysis</keyword>
<keyword id="KW-0413">Isomerase</keyword>
<keyword id="KW-1185">Reference proteome</keyword>
<dbReference type="EC" id="5.3.1.9" evidence="1"/>
<dbReference type="EMBL" id="CU468135">
    <property type="protein sequence ID" value="CAO98157.1"/>
    <property type="molecule type" value="Genomic_DNA"/>
</dbReference>
<dbReference type="RefSeq" id="WP_012442807.1">
    <property type="nucleotide sequence ID" value="NC_010694.1"/>
</dbReference>
<dbReference type="SMR" id="B2VKB1"/>
<dbReference type="STRING" id="465817.ETA_31110"/>
<dbReference type="KEGG" id="eta:ETA_31110"/>
<dbReference type="eggNOG" id="COG0166">
    <property type="taxonomic scope" value="Bacteria"/>
</dbReference>
<dbReference type="HOGENOM" id="CLU_017947_3_1_6"/>
<dbReference type="OrthoDB" id="140919at2"/>
<dbReference type="UniPathway" id="UPA00109">
    <property type="reaction ID" value="UER00181"/>
</dbReference>
<dbReference type="UniPathway" id="UPA00138"/>
<dbReference type="Proteomes" id="UP000001726">
    <property type="component" value="Chromosome"/>
</dbReference>
<dbReference type="GO" id="GO:0005829">
    <property type="term" value="C:cytosol"/>
    <property type="evidence" value="ECO:0007669"/>
    <property type="project" value="TreeGrafter"/>
</dbReference>
<dbReference type="GO" id="GO:0097367">
    <property type="term" value="F:carbohydrate derivative binding"/>
    <property type="evidence" value="ECO:0007669"/>
    <property type="project" value="InterPro"/>
</dbReference>
<dbReference type="GO" id="GO:0004347">
    <property type="term" value="F:glucose-6-phosphate isomerase activity"/>
    <property type="evidence" value="ECO:0007669"/>
    <property type="project" value="UniProtKB-UniRule"/>
</dbReference>
<dbReference type="GO" id="GO:0048029">
    <property type="term" value="F:monosaccharide binding"/>
    <property type="evidence" value="ECO:0007669"/>
    <property type="project" value="TreeGrafter"/>
</dbReference>
<dbReference type="GO" id="GO:0006094">
    <property type="term" value="P:gluconeogenesis"/>
    <property type="evidence" value="ECO:0007669"/>
    <property type="project" value="UniProtKB-UniRule"/>
</dbReference>
<dbReference type="GO" id="GO:0051156">
    <property type="term" value="P:glucose 6-phosphate metabolic process"/>
    <property type="evidence" value="ECO:0007669"/>
    <property type="project" value="TreeGrafter"/>
</dbReference>
<dbReference type="GO" id="GO:0006096">
    <property type="term" value="P:glycolytic process"/>
    <property type="evidence" value="ECO:0007669"/>
    <property type="project" value="UniProtKB-UniRule"/>
</dbReference>
<dbReference type="CDD" id="cd05015">
    <property type="entry name" value="SIS_PGI_1"/>
    <property type="match status" value="1"/>
</dbReference>
<dbReference type="CDD" id="cd05016">
    <property type="entry name" value="SIS_PGI_2"/>
    <property type="match status" value="1"/>
</dbReference>
<dbReference type="FunFam" id="1.10.1390.10:FF:000001">
    <property type="entry name" value="Glucose-6-phosphate isomerase"/>
    <property type="match status" value="1"/>
</dbReference>
<dbReference type="FunFam" id="3.40.50.10490:FF:000004">
    <property type="entry name" value="Glucose-6-phosphate isomerase"/>
    <property type="match status" value="1"/>
</dbReference>
<dbReference type="Gene3D" id="1.10.1390.10">
    <property type="match status" value="1"/>
</dbReference>
<dbReference type="Gene3D" id="3.40.50.10490">
    <property type="entry name" value="Glucose-6-phosphate isomerase like protein, domain 1"/>
    <property type="match status" value="2"/>
</dbReference>
<dbReference type="HAMAP" id="MF_00473">
    <property type="entry name" value="G6P_isomerase"/>
    <property type="match status" value="1"/>
</dbReference>
<dbReference type="InterPro" id="IPR001672">
    <property type="entry name" value="G6P_Isomerase"/>
</dbReference>
<dbReference type="InterPro" id="IPR023096">
    <property type="entry name" value="G6P_Isomerase_C"/>
</dbReference>
<dbReference type="InterPro" id="IPR018189">
    <property type="entry name" value="Phosphoglucose_isomerase_CS"/>
</dbReference>
<dbReference type="InterPro" id="IPR046348">
    <property type="entry name" value="SIS_dom_sf"/>
</dbReference>
<dbReference type="InterPro" id="IPR035476">
    <property type="entry name" value="SIS_PGI_1"/>
</dbReference>
<dbReference type="InterPro" id="IPR035482">
    <property type="entry name" value="SIS_PGI_2"/>
</dbReference>
<dbReference type="NCBIfam" id="NF001211">
    <property type="entry name" value="PRK00179.1"/>
    <property type="match status" value="1"/>
</dbReference>
<dbReference type="PANTHER" id="PTHR11469">
    <property type="entry name" value="GLUCOSE-6-PHOSPHATE ISOMERASE"/>
    <property type="match status" value="1"/>
</dbReference>
<dbReference type="PANTHER" id="PTHR11469:SF1">
    <property type="entry name" value="GLUCOSE-6-PHOSPHATE ISOMERASE"/>
    <property type="match status" value="1"/>
</dbReference>
<dbReference type="Pfam" id="PF00342">
    <property type="entry name" value="PGI"/>
    <property type="match status" value="1"/>
</dbReference>
<dbReference type="PRINTS" id="PR00662">
    <property type="entry name" value="G6PISOMERASE"/>
</dbReference>
<dbReference type="SUPFAM" id="SSF53697">
    <property type="entry name" value="SIS domain"/>
    <property type="match status" value="1"/>
</dbReference>
<dbReference type="PROSITE" id="PS00765">
    <property type="entry name" value="P_GLUCOSE_ISOMERASE_1"/>
    <property type="match status" value="1"/>
</dbReference>
<dbReference type="PROSITE" id="PS00174">
    <property type="entry name" value="P_GLUCOSE_ISOMERASE_2"/>
    <property type="match status" value="1"/>
</dbReference>
<dbReference type="PROSITE" id="PS51463">
    <property type="entry name" value="P_GLUCOSE_ISOMERASE_3"/>
    <property type="match status" value="1"/>
</dbReference>
<protein>
    <recommendedName>
        <fullName evidence="1">Glucose-6-phosphate isomerase</fullName>
        <shortName evidence="1">GPI</shortName>
        <ecNumber evidence="1">5.3.1.9</ecNumber>
    </recommendedName>
    <alternativeName>
        <fullName evidence="1">Phosphoglucose isomerase</fullName>
        <shortName evidence="1">PGI</shortName>
    </alternativeName>
    <alternativeName>
        <fullName evidence="1">Phosphohexose isomerase</fullName>
        <shortName evidence="1">PHI</shortName>
    </alternativeName>
</protein>
<comment type="function">
    <text evidence="1">Catalyzes the reversible isomerization of glucose-6-phosphate to fructose-6-phosphate.</text>
</comment>
<comment type="catalytic activity">
    <reaction evidence="1">
        <text>alpha-D-glucose 6-phosphate = beta-D-fructose 6-phosphate</text>
        <dbReference type="Rhea" id="RHEA:11816"/>
        <dbReference type="ChEBI" id="CHEBI:57634"/>
        <dbReference type="ChEBI" id="CHEBI:58225"/>
        <dbReference type="EC" id="5.3.1.9"/>
    </reaction>
</comment>
<comment type="pathway">
    <text evidence="1">Carbohydrate biosynthesis; gluconeogenesis.</text>
</comment>
<comment type="pathway">
    <text evidence="1">Carbohydrate degradation; glycolysis; D-glyceraldehyde 3-phosphate and glycerone phosphate from D-glucose: step 2/4.</text>
</comment>
<comment type="subcellular location">
    <subcellularLocation>
        <location evidence="1">Cytoplasm</location>
    </subcellularLocation>
</comment>
<comment type="similarity">
    <text evidence="1">Belongs to the GPI family.</text>
</comment>